<dbReference type="EMBL" id="CP000143">
    <property type="protein sequence ID" value="ABA80399.1"/>
    <property type="molecule type" value="Genomic_DNA"/>
</dbReference>
<dbReference type="RefSeq" id="WP_011338798.1">
    <property type="nucleotide sequence ID" value="NC_007493.2"/>
</dbReference>
<dbReference type="RefSeq" id="YP_354300.1">
    <property type="nucleotide sequence ID" value="NC_007493.2"/>
</dbReference>
<dbReference type="SMR" id="Q3IYI5"/>
<dbReference type="STRING" id="272943.RSP_1218"/>
<dbReference type="EnsemblBacteria" id="ABA80399">
    <property type="protein sequence ID" value="ABA80399"/>
    <property type="gene ID" value="RSP_1218"/>
</dbReference>
<dbReference type="GeneID" id="3720246"/>
<dbReference type="KEGG" id="rsp:RSP_1218"/>
<dbReference type="PATRIC" id="fig|272943.9.peg.3199"/>
<dbReference type="eggNOG" id="COG0249">
    <property type="taxonomic scope" value="Bacteria"/>
</dbReference>
<dbReference type="OrthoDB" id="9802448at2"/>
<dbReference type="PhylomeDB" id="Q3IYI5"/>
<dbReference type="Proteomes" id="UP000002703">
    <property type="component" value="Chromosome 1"/>
</dbReference>
<dbReference type="GO" id="GO:0005829">
    <property type="term" value="C:cytosol"/>
    <property type="evidence" value="ECO:0007669"/>
    <property type="project" value="TreeGrafter"/>
</dbReference>
<dbReference type="GO" id="GO:0005524">
    <property type="term" value="F:ATP binding"/>
    <property type="evidence" value="ECO:0007669"/>
    <property type="project" value="UniProtKB-UniRule"/>
</dbReference>
<dbReference type="GO" id="GO:0140664">
    <property type="term" value="F:ATP-dependent DNA damage sensor activity"/>
    <property type="evidence" value="ECO:0007669"/>
    <property type="project" value="InterPro"/>
</dbReference>
<dbReference type="GO" id="GO:0003684">
    <property type="term" value="F:damaged DNA binding"/>
    <property type="evidence" value="ECO:0007669"/>
    <property type="project" value="UniProtKB-UniRule"/>
</dbReference>
<dbReference type="GO" id="GO:0030983">
    <property type="term" value="F:mismatched DNA binding"/>
    <property type="evidence" value="ECO:0007669"/>
    <property type="project" value="InterPro"/>
</dbReference>
<dbReference type="GO" id="GO:0006298">
    <property type="term" value="P:mismatch repair"/>
    <property type="evidence" value="ECO:0007669"/>
    <property type="project" value="UniProtKB-UniRule"/>
</dbReference>
<dbReference type="CDD" id="cd03284">
    <property type="entry name" value="ABC_MutS1"/>
    <property type="match status" value="1"/>
</dbReference>
<dbReference type="FunFam" id="3.40.1170.10:FF:000001">
    <property type="entry name" value="DNA mismatch repair protein MutS"/>
    <property type="match status" value="1"/>
</dbReference>
<dbReference type="Gene3D" id="1.10.1420.10">
    <property type="match status" value="2"/>
</dbReference>
<dbReference type="Gene3D" id="6.10.140.430">
    <property type="match status" value="1"/>
</dbReference>
<dbReference type="Gene3D" id="3.40.1170.10">
    <property type="entry name" value="DNA repair protein MutS, domain I"/>
    <property type="match status" value="1"/>
</dbReference>
<dbReference type="Gene3D" id="3.30.420.110">
    <property type="entry name" value="MutS, connector domain"/>
    <property type="match status" value="1"/>
</dbReference>
<dbReference type="Gene3D" id="3.40.50.300">
    <property type="entry name" value="P-loop containing nucleotide triphosphate hydrolases"/>
    <property type="match status" value="1"/>
</dbReference>
<dbReference type="HAMAP" id="MF_00096">
    <property type="entry name" value="MutS"/>
    <property type="match status" value="1"/>
</dbReference>
<dbReference type="InterPro" id="IPR005748">
    <property type="entry name" value="DNA_mismatch_repair_MutS"/>
</dbReference>
<dbReference type="InterPro" id="IPR007695">
    <property type="entry name" value="DNA_mismatch_repair_MutS-lik_N"/>
</dbReference>
<dbReference type="InterPro" id="IPR017261">
    <property type="entry name" value="DNA_mismatch_repair_MutS/MSH"/>
</dbReference>
<dbReference type="InterPro" id="IPR000432">
    <property type="entry name" value="DNA_mismatch_repair_MutS_C"/>
</dbReference>
<dbReference type="InterPro" id="IPR007861">
    <property type="entry name" value="DNA_mismatch_repair_MutS_clamp"/>
</dbReference>
<dbReference type="InterPro" id="IPR007696">
    <property type="entry name" value="DNA_mismatch_repair_MutS_core"/>
</dbReference>
<dbReference type="InterPro" id="IPR016151">
    <property type="entry name" value="DNA_mismatch_repair_MutS_N"/>
</dbReference>
<dbReference type="InterPro" id="IPR036187">
    <property type="entry name" value="DNA_mismatch_repair_MutS_sf"/>
</dbReference>
<dbReference type="InterPro" id="IPR007860">
    <property type="entry name" value="DNA_mmatch_repair_MutS_con_dom"/>
</dbReference>
<dbReference type="InterPro" id="IPR045076">
    <property type="entry name" value="MutS"/>
</dbReference>
<dbReference type="InterPro" id="IPR036678">
    <property type="entry name" value="MutS_con_dom_sf"/>
</dbReference>
<dbReference type="InterPro" id="IPR027417">
    <property type="entry name" value="P-loop_NTPase"/>
</dbReference>
<dbReference type="NCBIfam" id="TIGR01070">
    <property type="entry name" value="mutS1"/>
    <property type="match status" value="1"/>
</dbReference>
<dbReference type="NCBIfam" id="NF003810">
    <property type="entry name" value="PRK05399.1"/>
    <property type="match status" value="1"/>
</dbReference>
<dbReference type="PANTHER" id="PTHR11361:SF34">
    <property type="entry name" value="DNA MISMATCH REPAIR PROTEIN MSH1, MITOCHONDRIAL"/>
    <property type="match status" value="1"/>
</dbReference>
<dbReference type="PANTHER" id="PTHR11361">
    <property type="entry name" value="DNA MISMATCH REPAIR PROTEIN MUTS FAMILY MEMBER"/>
    <property type="match status" value="1"/>
</dbReference>
<dbReference type="Pfam" id="PF01624">
    <property type="entry name" value="MutS_I"/>
    <property type="match status" value="1"/>
</dbReference>
<dbReference type="Pfam" id="PF05188">
    <property type="entry name" value="MutS_II"/>
    <property type="match status" value="1"/>
</dbReference>
<dbReference type="Pfam" id="PF05192">
    <property type="entry name" value="MutS_III"/>
    <property type="match status" value="1"/>
</dbReference>
<dbReference type="Pfam" id="PF05190">
    <property type="entry name" value="MutS_IV"/>
    <property type="match status" value="1"/>
</dbReference>
<dbReference type="Pfam" id="PF00488">
    <property type="entry name" value="MutS_V"/>
    <property type="match status" value="1"/>
</dbReference>
<dbReference type="PIRSF" id="PIRSF037677">
    <property type="entry name" value="DNA_mis_repair_Msh6"/>
    <property type="match status" value="1"/>
</dbReference>
<dbReference type="SMART" id="SM00534">
    <property type="entry name" value="MUTSac"/>
    <property type="match status" value="1"/>
</dbReference>
<dbReference type="SMART" id="SM00533">
    <property type="entry name" value="MUTSd"/>
    <property type="match status" value="1"/>
</dbReference>
<dbReference type="SUPFAM" id="SSF55271">
    <property type="entry name" value="DNA repair protein MutS, domain I"/>
    <property type="match status" value="1"/>
</dbReference>
<dbReference type="SUPFAM" id="SSF53150">
    <property type="entry name" value="DNA repair protein MutS, domain II"/>
    <property type="match status" value="1"/>
</dbReference>
<dbReference type="SUPFAM" id="SSF48334">
    <property type="entry name" value="DNA repair protein MutS, domain III"/>
    <property type="match status" value="1"/>
</dbReference>
<dbReference type="SUPFAM" id="SSF52540">
    <property type="entry name" value="P-loop containing nucleoside triphosphate hydrolases"/>
    <property type="match status" value="1"/>
</dbReference>
<dbReference type="PROSITE" id="PS00486">
    <property type="entry name" value="DNA_MISMATCH_REPAIR_2"/>
    <property type="match status" value="1"/>
</dbReference>
<keyword id="KW-0067">ATP-binding</keyword>
<keyword id="KW-0227">DNA damage</keyword>
<keyword id="KW-0234">DNA repair</keyword>
<keyword id="KW-0238">DNA-binding</keyword>
<keyword id="KW-0547">Nucleotide-binding</keyword>
<keyword id="KW-1185">Reference proteome</keyword>
<gene>
    <name evidence="1" type="primary">mutS</name>
    <name type="ordered locus">RHOS4_28310</name>
    <name type="ORF">RSP_1218</name>
</gene>
<accession>Q3IYI5</accession>
<protein>
    <recommendedName>
        <fullName evidence="1">DNA mismatch repair protein MutS</fullName>
    </recommendedName>
</protein>
<sequence length="875" mass="95718">MSDDTVTPMMAQYLEIKAQNPGAILFYRMGDFYEMFFDDAALAAEALDIALTKRGKHRGEDIAMCGVPIHAAEGYLLTLIRKGFRVAIAEQMEDPAEAKKRGSKSVVRREVVRLVTPGTLTEDTLLEARRHNYLCAFAEIRDEAALAWADISTGELSVTACPLPRLMPELARLAPRELLVADERELDWIEEVGCALTPLSRASFDSASAEKRLCALFGVGTLESFGNFTRAELSAMGALVDYLDLTQRGKLPLLRPPVRETVGGTVQIDAATRRNLEITQALAGGRDGSLLSAVDRTVTAPGARLLERRLSSPTRDLGLIHERLGAVRWLTEEPRLREEMRASLRRVPDMDRALSRLALDRAGPRDMAAIRAGLAQAQEIAQRMPAEAPALVTRALEALGGHEALVDLLDQALVAEPPLLARDGGFIAQGFDADLDETRRLRDEGRGVIASMQAGFIEVTGIQSLKIKHNNVLGYFIEVTSTHAEKMLSAPLSERFIHRQTTAGQVRFTTVELSELETRILNAGNRALDLEKMHFAALRTAILDLAGQIGRAARSLAELDLISAFADLAVTEDWTEPEIDDSRAFAIEAGRHPVVERALRRTGTPFVANHCDLSTGETPAVWLITGPNMAGKSTFLRQNALIALLAQAGSFVPARRAHIGLVSQIFSRVGASDDLARGRSTFMVEMVETAAILNQADDRALVILDEIGRGTATWDGLSIAWATLEHLHDRNRCRALFATHYHEMTALAGKLKGVENATVAVKEWEGDVIFLHEVRRGAADRSYGVQVARLAGLPASVIERARTVLDALESGERESGGRRQTLIDDLPLFRAAPPPPAPAAPKTSPVEERLREIQPDDLSPREALKLLYDLRALLT</sequence>
<name>MUTS_CERS4</name>
<evidence type="ECO:0000255" key="1">
    <source>
        <dbReference type="HAMAP-Rule" id="MF_00096"/>
    </source>
</evidence>
<evidence type="ECO:0000256" key="2">
    <source>
        <dbReference type="SAM" id="MobiDB-lite"/>
    </source>
</evidence>
<proteinExistence type="inferred from homology"/>
<organism>
    <name type="scientific">Cereibacter sphaeroides (strain ATCC 17023 / DSM 158 / JCM 6121 / CCUG 31486 / LMG 2827 / NBRC 12203 / NCIMB 8253 / ATH 2.4.1.)</name>
    <name type="common">Rhodobacter sphaeroides</name>
    <dbReference type="NCBI Taxonomy" id="272943"/>
    <lineage>
        <taxon>Bacteria</taxon>
        <taxon>Pseudomonadati</taxon>
        <taxon>Pseudomonadota</taxon>
        <taxon>Alphaproteobacteria</taxon>
        <taxon>Rhodobacterales</taxon>
        <taxon>Paracoccaceae</taxon>
        <taxon>Cereibacter</taxon>
    </lineage>
</organism>
<feature type="chain" id="PRO_0000224398" description="DNA mismatch repair protein MutS">
    <location>
        <begin position="1"/>
        <end position="875"/>
    </location>
</feature>
<feature type="region of interest" description="Disordered" evidence="2">
    <location>
        <begin position="830"/>
        <end position="855"/>
    </location>
</feature>
<feature type="compositionally biased region" description="Basic and acidic residues" evidence="2">
    <location>
        <begin position="845"/>
        <end position="855"/>
    </location>
</feature>
<feature type="binding site" evidence="1">
    <location>
        <begin position="626"/>
        <end position="633"/>
    </location>
    <ligand>
        <name>ATP</name>
        <dbReference type="ChEBI" id="CHEBI:30616"/>
    </ligand>
</feature>
<comment type="function">
    <text evidence="1">This protein is involved in the repair of mismatches in DNA. It is possible that it carries out the mismatch recognition step. This protein has a weak ATPase activity.</text>
</comment>
<comment type="similarity">
    <text evidence="1">Belongs to the DNA mismatch repair MutS family.</text>
</comment>
<reference key="1">
    <citation type="submission" date="2005-09" db="EMBL/GenBank/DDBJ databases">
        <title>Complete sequence of chromosome 1 of Rhodobacter sphaeroides 2.4.1.</title>
        <authorList>
            <person name="Copeland A."/>
            <person name="Lucas S."/>
            <person name="Lapidus A."/>
            <person name="Barry K."/>
            <person name="Detter J.C."/>
            <person name="Glavina T."/>
            <person name="Hammon N."/>
            <person name="Israni S."/>
            <person name="Pitluck S."/>
            <person name="Richardson P."/>
            <person name="Mackenzie C."/>
            <person name="Choudhary M."/>
            <person name="Larimer F."/>
            <person name="Hauser L.J."/>
            <person name="Land M."/>
            <person name="Donohue T.J."/>
            <person name="Kaplan S."/>
        </authorList>
    </citation>
    <scope>NUCLEOTIDE SEQUENCE [LARGE SCALE GENOMIC DNA]</scope>
    <source>
        <strain>ATCC 17023 / DSM 158 / JCM 6121 / CCUG 31486 / LMG 2827 / NBRC 12203 / NCIMB 8253 / ATH 2.4.1.</strain>
    </source>
</reference>